<name>PLD_RICPR</name>
<gene>
    <name type="primary">pld</name>
    <name type="ordered locus">RP819</name>
</gene>
<organism>
    <name type="scientific">Rickettsia prowazekii (strain Madrid E)</name>
    <dbReference type="NCBI Taxonomy" id="272947"/>
    <lineage>
        <taxon>Bacteria</taxon>
        <taxon>Pseudomonadati</taxon>
        <taxon>Pseudomonadota</taxon>
        <taxon>Alphaproteobacteria</taxon>
        <taxon>Rickettsiales</taxon>
        <taxon>Rickettsiaceae</taxon>
        <taxon>Rickettsieae</taxon>
        <taxon>Rickettsia</taxon>
        <taxon>typhus group</taxon>
    </lineage>
</organism>
<feature type="signal peptide" evidence="2">
    <location>
        <begin position="1"/>
        <end position="22"/>
    </location>
</feature>
<feature type="chain" id="PRO_0000274784" description="Phospholipase D">
    <location>
        <begin position="23"/>
        <end position="205"/>
    </location>
</feature>
<feature type="domain" description="PLD phosphodiesterase" evidence="3">
    <location>
        <begin position="142"/>
        <end position="169"/>
    </location>
</feature>
<feature type="active site" evidence="3">
    <location>
        <position position="147"/>
    </location>
</feature>
<feature type="active site" evidence="3">
    <location>
        <position position="149"/>
    </location>
</feature>
<feature type="active site" evidence="3">
    <location>
        <position position="154"/>
    </location>
</feature>
<proteinExistence type="inferred from homology"/>
<sequence>MKSKNNKFIAVSISFILGIALGIYVESTYYFTNIINSKSFSLSNAQINYYSISELSRSNVSTCFTPPAGCTKFIVQQIEKAEESIYMQAYGMSDSLITTALINAQMRGVKVRILLDRSNLKQKFSKLYELQQAKIDVGIDTVPGIAHNKVIIIDKKKVITGSFNFTVSADKRNAENVILIEDRKLAESYLQNWFSRKTTSNAVHF</sequence>
<evidence type="ECO:0000250" key="1"/>
<evidence type="ECO:0000255" key="2"/>
<evidence type="ECO:0000255" key="3">
    <source>
        <dbReference type="PROSITE-ProRule" id="PRU00153"/>
    </source>
</evidence>
<evidence type="ECO:0000269" key="4">
    <source>
    </source>
</evidence>
<evidence type="ECO:0000305" key="5"/>
<comment type="function">
    <text evidence="4">Could be a virulence factor.</text>
</comment>
<comment type="catalytic activity">
    <reaction>
        <text>a 1,2-diacyl-sn-glycero-3-phosphocholine + H2O = a 1,2-diacyl-sn-glycero-3-phosphate + choline + H(+)</text>
        <dbReference type="Rhea" id="RHEA:14445"/>
        <dbReference type="ChEBI" id="CHEBI:15354"/>
        <dbReference type="ChEBI" id="CHEBI:15377"/>
        <dbReference type="ChEBI" id="CHEBI:15378"/>
        <dbReference type="ChEBI" id="CHEBI:57643"/>
        <dbReference type="ChEBI" id="CHEBI:58608"/>
        <dbReference type="EC" id="3.1.4.4"/>
    </reaction>
</comment>
<comment type="subunit">
    <text evidence="1">Homodimer.</text>
</comment>
<comment type="subcellular location">
    <subcellularLocation>
        <location evidence="5">Secreted</location>
    </subcellularLocation>
</comment>
<comment type="similarity">
    <text evidence="5">Belongs to the phospholipase D family.</text>
</comment>
<protein>
    <recommendedName>
        <fullName>Phospholipase D</fullName>
        <shortName>PLD</shortName>
        <ecNumber>3.1.4.4</ecNumber>
    </recommendedName>
    <alternativeName>
        <fullName>Choline phosphatase</fullName>
    </alternativeName>
</protein>
<dbReference type="EC" id="3.1.4.4"/>
<dbReference type="EMBL" id="AJ235273">
    <property type="protein sequence ID" value="CAA15244.1"/>
    <property type="molecule type" value="Genomic_DNA"/>
</dbReference>
<dbReference type="PIR" id="D71643">
    <property type="entry name" value="D71643"/>
</dbReference>
<dbReference type="RefSeq" id="NP_221168.1">
    <property type="nucleotide sequence ID" value="NC_000963.1"/>
</dbReference>
<dbReference type="RefSeq" id="WP_004596866.1">
    <property type="nucleotide sequence ID" value="NC_000963.1"/>
</dbReference>
<dbReference type="SMR" id="Q9ZCD8"/>
<dbReference type="STRING" id="272947.gene:17555888"/>
<dbReference type="EnsemblBacteria" id="CAA15244">
    <property type="protein sequence ID" value="CAA15244"/>
    <property type="gene ID" value="CAA15244"/>
</dbReference>
<dbReference type="GeneID" id="57569941"/>
<dbReference type="KEGG" id="rpr:RP819"/>
<dbReference type="PATRIC" id="fig|272947.5.peg.854"/>
<dbReference type="eggNOG" id="COG1502">
    <property type="taxonomic scope" value="Bacteria"/>
</dbReference>
<dbReference type="HOGENOM" id="CLU_080814_3_0_5"/>
<dbReference type="OrthoDB" id="9762009at2"/>
<dbReference type="Proteomes" id="UP000002480">
    <property type="component" value="Chromosome"/>
</dbReference>
<dbReference type="GO" id="GO:0005576">
    <property type="term" value="C:extracellular region"/>
    <property type="evidence" value="ECO:0007669"/>
    <property type="project" value="UniProtKB-SubCell"/>
</dbReference>
<dbReference type="GO" id="GO:0004630">
    <property type="term" value="F:phospholipase D activity"/>
    <property type="evidence" value="ECO:0007669"/>
    <property type="project" value="UniProtKB-EC"/>
</dbReference>
<dbReference type="GO" id="GO:0016891">
    <property type="term" value="F:RNA endonuclease activity, producing 5'-phosphomonoesters"/>
    <property type="evidence" value="ECO:0007669"/>
    <property type="project" value="TreeGrafter"/>
</dbReference>
<dbReference type="GO" id="GO:0016042">
    <property type="term" value="P:lipid catabolic process"/>
    <property type="evidence" value="ECO:0007669"/>
    <property type="project" value="UniProtKB-KW"/>
</dbReference>
<dbReference type="GO" id="GO:0006793">
    <property type="term" value="P:phosphorus metabolic process"/>
    <property type="evidence" value="ECO:0007669"/>
    <property type="project" value="UniProtKB-ARBA"/>
</dbReference>
<dbReference type="CDD" id="cd09170">
    <property type="entry name" value="PLDc_Nuc"/>
    <property type="match status" value="1"/>
</dbReference>
<dbReference type="Gene3D" id="3.30.870.10">
    <property type="entry name" value="Endonuclease Chain A"/>
    <property type="match status" value="1"/>
</dbReference>
<dbReference type="InterPro" id="IPR025202">
    <property type="entry name" value="PLD-like_dom"/>
</dbReference>
<dbReference type="InterPro" id="IPR051406">
    <property type="entry name" value="PLD_domain"/>
</dbReference>
<dbReference type="InterPro" id="IPR001736">
    <property type="entry name" value="PLipase_D/transphosphatidylase"/>
</dbReference>
<dbReference type="PANTHER" id="PTHR43856">
    <property type="entry name" value="CARDIOLIPIN HYDROLASE"/>
    <property type="match status" value="1"/>
</dbReference>
<dbReference type="PANTHER" id="PTHR43856:SF1">
    <property type="entry name" value="MITOCHONDRIAL CARDIOLIPIN HYDROLASE"/>
    <property type="match status" value="1"/>
</dbReference>
<dbReference type="Pfam" id="PF13091">
    <property type="entry name" value="PLDc_2"/>
    <property type="match status" value="1"/>
</dbReference>
<dbReference type="SMART" id="SM00155">
    <property type="entry name" value="PLDc"/>
    <property type="match status" value="1"/>
</dbReference>
<dbReference type="SUPFAM" id="SSF56024">
    <property type="entry name" value="Phospholipase D/nuclease"/>
    <property type="match status" value="1"/>
</dbReference>
<dbReference type="PROSITE" id="PS50035">
    <property type="entry name" value="PLD"/>
    <property type="match status" value="1"/>
</dbReference>
<reference key="1">
    <citation type="journal article" date="1998" name="Nature">
        <title>The genome sequence of Rickettsia prowazekii and the origin of mitochondria.</title>
        <authorList>
            <person name="Andersson S.G.E."/>
            <person name="Zomorodipour A."/>
            <person name="Andersson J.O."/>
            <person name="Sicheritz-Ponten T."/>
            <person name="Alsmark U.C.M."/>
            <person name="Podowski R.M."/>
            <person name="Naeslund A.K."/>
            <person name="Eriksson A.-S."/>
            <person name="Winkler H.H."/>
            <person name="Kurland C.G."/>
        </authorList>
    </citation>
    <scope>NUCLEOTIDE SEQUENCE [LARGE SCALE GENOMIC DNA]</scope>
    <source>
        <strain>Madrid E</strain>
    </source>
</reference>
<reference key="2">
    <citation type="journal article" date="2003" name="J. Infect. Dis.">
        <title>Identification and characterization of a phospholipase D-superfamily gene in Rickettsiae.</title>
        <authorList>
            <person name="Renesto P."/>
            <person name="Dehoux P."/>
            <person name="Gouin E."/>
            <person name="Touqui L."/>
            <person name="Cossart P."/>
            <person name="Raoult D."/>
        </authorList>
    </citation>
    <scope>FUNCTION</scope>
    <source>
        <strain>ATCC VR-142 / Breinl</strain>
    </source>
</reference>
<accession>Q9ZCD8</accession>
<keyword id="KW-0378">Hydrolase</keyword>
<keyword id="KW-0442">Lipid degradation</keyword>
<keyword id="KW-0443">Lipid metabolism</keyword>
<keyword id="KW-1185">Reference proteome</keyword>
<keyword id="KW-0964">Secreted</keyword>
<keyword id="KW-0732">Signal</keyword>
<keyword id="KW-0843">Virulence</keyword>